<reference key="1">
    <citation type="journal article" date="2006" name="PLoS Genet.">
        <title>The complete genome sequence and comparative genome analysis of the high pathogenicity Yersinia enterocolitica strain 8081.</title>
        <authorList>
            <person name="Thomson N.R."/>
            <person name="Howard S."/>
            <person name="Wren B.W."/>
            <person name="Holden M.T.G."/>
            <person name="Crossman L."/>
            <person name="Challis G.L."/>
            <person name="Churcher C."/>
            <person name="Mungall K."/>
            <person name="Brooks K."/>
            <person name="Chillingworth T."/>
            <person name="Feltwell T."/>
            <person name="Abdellah Z."/>
            <person name="Hauser H."/>
            <person name="Jagels K."/>
            <person name="Maddison M."/>
            <person name="Moule S."/>
            <person name="Sanders M."/>
            <person name="Whitehead S."/>
            <person name="Quail M.A."/>
            <person name="Dougan G."/>
            <person name="Parkhill J."/>
            <person name="Prentice M.B."/>
        </authorList>
    </citation>
    <scope>NUCLEOTIDE SEQUENCE [LARGE SCALE GENOMIC DNA]</scope>
    <source>
        <strain>NCTC 13174 / 8081</strain>
    </source>
</reference>
<sequence length="196" mass="21032">MLDRIKGCFTESIQTQIAAAEALPDAISRAAMTLVQSLLNGNKILCCGNGTSAANAQHFAASMINRFETERPSLPAIALNADNVVLTAIANDRLHDEVYAKQVRALGHAGDVLLAISTRGNSRDIVKAVEAAVTRDMTIVALTGYDGGELAGLLGQQDVEIRIPSHRSARVQELHMLTVNCLCDLIDNTLFPHQDD</sequence>
<name>DIAA_YERE8</name>
<evidence type="ECO:0000255" key="1">
    <source>
        <dbReference type="HAMAP-Rule" id="MF_01157"/>
    </source>
</evidence>
<dbReference type="EMBL" id="AM286415">
    <property type="protein sequence ID" value="CAL13755.1"/>
    <property type="molecule type" value="Genomic_DNA"/>
</dbReference>
<dbReference type="RefSeq" id="WP_004710884.1">
    <property type="nucleotide sequence ID" value="NC_008800.1"/>
</dbReference>
<dbReference type="RefSeq" id="YP_001007883.1">
    <property type="nucleotide sequence ID" value="NC_008800.1"/>
</dbReference>
<dbReference type="SMR" id="A1JR74"/>
<dbReference type="GeneID" id="97454444"/>
<dbReference type="KEGG" id="yen:YE3729"/>
<dbReference type="PATRIC" id="fig|393305.7.peg.3971"/>
<dbReference type="eggNOG" id="COG0279">
    <property type="taxonomic scope" value="Bacteria"/>
</dbReference>
<dbReference type="HOGENOM" id="CLU_080999_3_1_6"/>
<dbReference type="OrthoDB" id="9810929at2"/>
<dbReference type="Proteomes" id="UP000000642">
    <property type="component" value="Chromosome"/>
</dbReference>
<dbReference type="GO" id="GO:0097367">
    <property type="term" value="F:carbohydrate derivative binding"/>
    <property type="evidence" value="ECO:0007669"/>
    <property type="project" value="InterPro"/>
</dbReference>
<dbReference type="GO" id="GO:1901135">
    <property type="term" value="P:carbohydrate derivative metabolic process"/>
    <property type="evidence" value="ECO:0007669"/>
    <property type="project" value="InterPro"/>
</dbReference>
<dbReference type="GO" id="GO:0006260">
    <property type="term" value="P:DNA replication"/>
    <property type="evidence" value="ECO:0007669"/>
    <property type="project" value="UniProtKB-UniRule"/>
</dbReference>
<dbReference type="CDD" id="cd05006">
    <property type="entry name" value="SIS_GmhA"/>
    <property type="match status" value="1"/>
</dbReference>
<dbReference type="FunFam" id="3.40.50.10490:FF:000006">
    <property type="entry name" value="DnaA initiator-associating protein DiaA"/>
    <property type="match status" value="1"/>
</dbReference>
<dbReference type="Gene3D" id="3.40.50.10490">
    <property type="entry name" value="Glucose-6-phosphate isomerase like protein, domain 1"/>
    <property type="match status" value="1"/>
</dbReference>
<dbReference type="HAMAP" id="MF_01157">
    <property type="entry name" value="SIS_DiaA"/>
    <property type="match status" value="1"/>
</dbReference>
<dbReference type="InterPro" id="IPR023070">
    <property type="entry name" value="DiaA"/>
</dbReference>
<dbReference type="InterPro" id="IPR035461">
    <property type="entry name" value="GmhA/DiaA"/>
</dbReference>
<dbReference type="InterPro" id="IPR001347">
    <property type="entry name" value="SIS_dom"/>
</dbReference>
<dbReference type="InterPro" id="IPR046348">
    <property type="entry name" value="SIS_dom_sf"/>
</dbReference>
<dbReference type="InterPro" id="IPR050099">
    <property type="entry name" value="SIS_GmhA/DiaA_subfam"/>
</dbReference>
<dbReference type="NCBIfam" id="NF008138">
    <property type="entry name" value="PRK10886.1"/>
    <property type="match status" value="1"/>
</dbReference>
<dbReference type="PANTHER" id="PTHR30390:SF6">
    <property type="entry name" value="DNAA INITIATOR-ASSOCIATING PROTEIN DIAA"/>
    <property type="match status" value="1"/>
</dbReference>
<dbReference type="PANTHER" id="PTHR30390">
    <property type="entry name" value="SEDOHEPTULOSE 7-PHOSPHATE ISOMERASE / DNAA INITIATOR-ASSOCIATING FACTOR FOR REPLICATION INITIATION"/>
    <property type="match status" value="1"/>
</dbReference>
<dbReference type="Pfam" id="PF13580">
    <property type="entry name" value="SIS_2"/>
    <property type="match status" value="1"/>
</dbReference>
<dbReference type="SUPFAM" id="SSF53697">
    <property type="entry name" value="SIS domain"/>
    <property type="match status" value="1"/>
</dbReference>
<dbReference type="PROSITE" id="PS51464">
    <property type="entry name" value="SIS"/>
    <property type="match status" value="1"/>
</dbReference>
<organism>
    <name type="scientific">Yersinia enterocolitica serotype O:8 / biotype 1B (strain NCTC 13174 / 8081)</name>
    <dbReference type="NCBI Taxonomy" id="393305"/>
    <lineage>
        <taxon>Bacteria</taxon>
        <taxon>Pseudomonadati</taxon>
        <taxon>Pseudomonadota</taxon>
        <taxon>Gammaproteobacteria</taxon>
        <taxon>Enterobacterales</taxon>
        <taxon>Yersiniaceae</taxon>
        <taxon>Yersinia</taxon>
    </lineage>
</organism>
<protein>
    <recommendedName>
        <fullName evidence="1">DnaA initiator-associating protein DiaA</fullName>
    </recommendedName>
</protein>
<feature type="chain" id="PRO_1000065553" description="DnaA initiator-associating protein DiaA">
    <location>
        <begin position="1"/>
        <end position="196"/>
    </location>
</feature>
<feature type="domain" description="SIS" evidence="1">
    <location>
        <begin position="34"/>
        <end position="196"/>
    </location>
</feature>
<keyword id="KW-0235">DNA replication</keyword>
<comment type="function">
    <text evidence="1">Required for the timely initiation of chromosomal replication via direct interactions with the DnaA initiator protein.</text>
</comment>
<comment type="subunit">
    <text evidence="1">Homotetramer; dimer of dimers.</text>
</comment>
<comment type="similarity">
    <text evidence="1">Belongs to the SIS family. DiaA subfamily.</text>
</comment>
<accession>A1JR74</accession>
<proteinExistence type="inferred from homology"/>
<gene>
    <name evidence="1" type="primary">diaA</name>
    <name type="ordered locus">YE3729</name>
</gene>